<protein>
    <recommendedName>
        <fullName>Acyclic carotenoid 1,2-hydratase</fullName>
        <ecNumber>4.2.1.131</ecNumber>
    </recommendedName>
    <alternativeName>
        <fullName>Hydroxyneurosporene synthase</fullName>
    </alternativeName>
    <alternativeName>
        <fullName>Lycopene hydratase</fullName>
    </alternativeName>
    <alternativeName>
        <fullName>Neurosporene hydratase</fullName>
    </alternativeName>
</protein>
<dbReference type="EC" id="4.2.1.131"/>
<dbReference type="EMBL" id="AJ010302">
    <property type="protein sequence ID" value="CAB38742.1"/>
    <property type="molecule type" value="Genomic_DNA"/>
</dbReference>
<dbReference type="EMBL" id="X63204">
    <property type="protein sequence ID" value="CAA44887.1"/>
    <property type="molecule type" value="Genomic_DNA"/>
</dbReference>
<dbReference type="EMBL" id="CP000143">
    <property type="protein sequence ID" value="ABA79441.2"/>
    <property type="status" value="ALT_INIT"/>
    <property type="molecule type" value="Genomic_DNA"/>
</dbReference>
<dbReference type="PIR" id="S49623">
    <property type="entry name" value="S49623"/>
</dbReference>
<dbReference type="RefSeq" id="WP_017140263.1">
    <property type="nucleotide sequence ID" value="NZ_CP030271.1"/>
</dbReference>
<dbReference type="RefSeq" id="YP_353342.2">
    <property type="nucleotide sequence ID" value="NC_007493.2"/>
</dbReference>
<dbReference type="STRING" id="272943.RSP_0267"/>
<dbReference type="EnsemblBacteria" id="ABA79441">
    <property type="protein sequence ID" value="ABA79441"/>
    <property type="gene ID" value="RSP_0267"/>
</dbReference>
<dbReference type="GeneID" id="3719277"/>
<dbReference type="KEGG" id="rsp:RSP_0267"/>
<dbReference type="PATRIC" id="fig|272943.9.peg.2211"/>
<dbReference type="eggNOG" id="COG5621">
    <property type="taxonomic scope" value="Bacteria"/>
</dbReference>
<dbReference type="OrthoDB" id="5491608at2"/>
<dbReference type="PhylomeDB" id="Q01670"/>
<dbReference type="UniPathway" id="UPA00683"/>
<dbReference type="Proteomes" id="UP000002703">
    <property type="component" value="Chromosome 1"/>
</dbReference>
<dbReference type="GO" id="GO:0016836">
    <property type="term" value="F:hydro-lyase activity"/>
    <property type="evidence" value="ECO:0000250"/>
    <property type="project" value="UniProtKB"/>
</dbReference>
<dbReference type="GO" id="GO:0016116">
    <property type="term" value="P:carotenoid metabolic process"/>
    <property type="evidence" value="ECO:0000250"/>
    <property type="project" value="UniProtKB"/>
</dbReference>
<dbReference type="GO" id="GO:0015995">
    <property type="term" value="P:chlorophyll biosynthetic process"/>
    <property type="evidence" value="ECO:0007669"/>
    <property type="project" value="UniProtKB-KW"/>
</dbReference>
<dbReference type="GO" id="GO:0015979">
    <property type="term" value="P:photosynthesis"/>
    <property type="evidence" value="ECO:0007669"/>
    <property type="project" value="UniProtKB-KW"/>
</dbReference>
<dbReference type="GO" id="GO:1901180">
    <property type="term" value="P:spheroidene biosynthetic process"/>
    <property type="evidence" value="ECO:0000250"/>
    <property type="project" value="UniProtKB"/>
</dbReference>
<dbReference type="CDD" id="cd21471">
    <property type="entry name" value="CrtC-like"/>
    <property type="match status" value="1"/>
</dbReference>
<dbReference type="NCBIfam" id="NF045922">
    <property type="entry name" value="CarotHydtaseCrtCRhod"/>
    <property type="match status" value="1"/>
</dbReference>
<dbReference type="SUPFAM" id="SSF159245">
    <property type="entry name" value="AttH-like"/>
    <property type="match status" value="1"/>
</dbReference>
<reference key="1">
    <citation type="journal article" date="1995" name="J. Bacteriol.">
        <title>Complete DNA sequence, specific Tn5 insertion map, and gene assignment of the carotenoid biosynthesis pathway of Rhodobacter sphaeroides.</title>
        <authorList>
            <person name="Lang H.P."/>
            <person name="Cogdell R.J."/>
            <person name="Takaichi S."/>
            <person name="Hunter C.N."/>
        </authorList>
    </citation>
    <scope>NUCLEOTIDE SEQUENCE [GENOMIC DNA]</scope>
</reference>
<reference key="2">
    <citation type="submission" date="2005-09" db="EMBL/GenBank/DDBJ databases">
        <title>Complete sequence of chromosome 1 of Rhodobacter sphaeroides 2.4.1.</title>
        <authorList>
            <person name="Copeland A."/>
            <person name="Lucas S."/>
            <person name="Lapidus A."/>
            <person name="Barry K."/>
            <person name="Detter J.C."/>
            <person name="Glavina T."/>
            <person name="Hammon N."/>
            <person name="Israni S."/>
            <person name="Pitluck S."/>
            <person name="Richardson P."/>
            <person name="Mackenzie C."/>
            <person name="Choudhary M."/>
            <person name="Larimer F."/>
            <person name="Hauser L.J."/>
            <person name="Land M."/>
            <person name="Donohue T.J."/>
            <person name="Kaplan S."/>
        </authorList>
    </citation>
    <scope>NUCLEOTIDE SEQUENCE [LARGE SCALE GENOMIC DNA]</scope>
    <source>
        <strain>ATCC 17023 / DSM 158 / JCM 6121 / CCUG 31486 / LMG 2827 / NBRC 12203 / NCIMB 8253 / ATH 2.4.1.</strain>
    </source>
</reference>
<reference key="3">
    <citation type="journal article" date="1992" name="FEMS Microbiol. Lett.">
        <title>Nucleotide sequence of the methoxyneurosporene dehydrogenase gene from Rhodobacter sphaeroides: comparison with other bacterial carotenoid dehydrogenases.</title>
        <authorList>
            <person name="Gari E."/>
            <person name="Toledo J.C."/>
            <person name="Gibert I."/>
            <person name="Barbe J."/>
        </authorList>
    </citation>
    <scope>NUCLEOTIDE SEQUENCE [GENOMIC DNA] OF 1-44</scope>
</reference>
<proteinExistence type="inferred from homology"/>
<organism>
    <name type="scientific">Cereibacter sphaeroides (strain ATCC 17023 / DSM 158 / JCM 6121 / CCUG 31486 / LMG 2827 / NBRC 12203 / NCIMB 8253 / ATH 2.4.1.)</name>
    <name type="common">Rhodobacter sphaeroides</name>
    <dbReference type="NCBI Taxonomy" id="272943"/>
    <lineage>
        <taxon>Bacteria</taxon>
        <taxon>Pseudomonadati</taxon>
        <taxon>Pseudomonadota</taxon>
        <taxon>Alphaproteobacteria</taxon>
        <taxon>Rhodobacterales</taxon>
        <taxon>Paracoccaceae</taxon>
        <taxon>Cereibacter</taxon>
    </lineage>
</organism>
<accession>Q01670</accession>
<accession>Q3J193</accession>
<sequence>MIGFIGSVFSPWYRWSGRKEPQNHCCLNVATYGPGGRFTMTDRGRAALRQSPDTLTVGPSRMHWTGTQLIVEVNEISSPPLVSPVKGRIVLTPTGITDVEVTLKDDGSHIWRPFAPTARIEVDLTQGHRWHGHGYFDANFGTAALEADFRFWTWGRYPVADGAACFYDATRRDGSRLELGLHVAADGRARLIQPPPEARFARSRWLVERHTPADPGTRPRQVMSMLDAPFYSRAMVETTVFGQKTVGVHEALDLRRFRSPLLMPMLAVRVPRRPGWSFS</sequence>
<gene>
    <name type="primary">crtC</name>
    <name type="synonym">ctrC</name>
    <name type="ordered locus">RHOS4_18730</name>
    <name type="ORF">RSP_0267</name>
</gene>
<keyword id="KW-0125">Carotenoid biosynthesis</keyword>
<keyword id="KW-0149">Chlorophyll biosynthesis</keyword>
<keyword id="KW-0456">Lyase</keyword>
<keyword id="KW-0602">Photosynthesis</keyword>
<keyword id="KW-1185">Reference proteome</keyword>
<feature type="chain" id="PRO_0000079366" description="Acyclic carotenoid 1,2-hydratase">
    <location>
        <begin position="1"/>
        <end position="279"/>
    </location>
</feature>
<feature type="sequence conflict" description="In Ref. 1; CAB38742." evidence="2" ref="1">
    <original>RGR</original>
    <variation>AA</variation>
    <location>
        <begin position="43"/>
        <end position="45"/>
    </location>
</feature>
<feature type="sequence conflict" description="In Ref. 3; CAA44887." evidence="2" ref="3">
    <original>G</original>
    <variation>A</variation>
    <location>
        <position position="44"/>
    </location>
</feature>
<feature type="sequence conflict" description="In Ref. 1; CAB38742." evidence="2" ref="1">
    <original>S</original>
    <variation>A</variation>
    <location>
        <position position="232"/>
    </location>
</feature>
<evidence type="ECO:0000250" key="1"/>
<evidence type="ECO:0000305" key="2"/>
<name>CRTC_CERS4</name>
<comment type="function">
    <text evidence="1">Involved in the biosynthesis of carotenoids spheroidene and spirilloxanthin. Catalyzes the hydration of neurosporene to the corresponding hydroxylated carotenoids 1-HO-neurosporene and that of lycopene to 1-HO-lycopene (By similarity).</text>
</comment>
<comment type="catalytic activity">
    <reaction>
        <text>rhodopin = all-trans-lycopene + H2O</text>
        <dbReference type="Rhea" id="RHEA:31607"/>
        <dbReference type="ChEBI" id="CHEBI:15377"/>
        <dbReference type="ChEBI" id="CHEBI:15948"/>
        <dbReference type="ChEBI" id="CHEBI:35331"/>
        <dbReference type="EC" id="4.2.1.131"/>
    </reaction>
</comment>
<comment type="catalytic activity">
    <reaction>
        <text>1-hydroxy-all-trans-1,2-dihydro-neurosporene = all-trans-neurosporene + H2O</text>
        <dbReference type="Rhea" id="RHEA:54220"/>
        <dbReference type="ChEBI" id="CHEBI:15377"/>
        <dbReference type="ChEBI" id="CHEBI:16833"/>
        <dbReference type="ChEBI" id="CHEBI:138077"/>
        <dbReference type="EC" id="4.2.1.131"/>
    </reaction>
</comment>
<comment type="pathway">
    <text>Carotenoid biosynthesis; spheroidene biosynthesis.</text>
</comment>
<comment type="similarity">
    <text evidence="2">Belongs to the CrtC hydratase family.</text>
</comment>
<comment type="sequence caution" evidence="2">
    <conflict type="erroneous initiation">
        <sequence resource="EMBL-CDS" id="ABA79441"/>
    </conflict>
    <text>Extended N-terminus.</text>
</comment>